<reference key="1">
    <citation type="journal article" date="2004" name="J. Bacteriol.">
        <title>An evolutionary hot spot: the pNGR234b replicon of Rhizobium sp. strain NGR234.</title>
        <authorList>
            <person name="Streit W.R."/>
            <person name="Schmitz R.A."/>
            <person name="Perret X."/>
            <person name="Staehelin C."/>
            <person name="Deakin W.J."/>
            <person name="Raasch C."/>
            <person name="Liesegang H."/>
            <person name="Broughton W.J."/>
        </authorList>
    </citation>
    <scope>NUCLEOTIDE SEQUENCE [LARGE SCALE GENOMIC DNA]</scope>
    <source>
        <strain>NBRC 101917 / NGR234</strain>
    </source>
</reference>
<reference key="2">
    <citation type="journal article" date="2009" name="Appl. Environ. Microbiol.">
        <title>Rhizobium sp. strain NGR234 possesses a remarkable number of secretion systems.</title>
        <authorList>
            <person name="Schmeisser C."/>
            <person name="Liesegang H."/>
            <person name="Krysciak D."/>
            <person name="Bakkou N."/>
            <person name="Le Quere A."/>
            <person name="Wollherr A."/>
            <person name="Heinemeyer I."/>
            <person name="Morgenstern B."/>
            <person name="Pommerening-Roeser A."/>
            <person name="Flores M."/>
            <person name="Palacios R."/>
            <person name="Brenner S."/>
            <person name="Gottschalk G."/>
            <person name="Schmitz R.A."/>
            <person name="Broughton W.J."/>
            <person name="Perret X."/>
            <person name="Strittmatter A.W."/>
            <person name="Streit W.R."/>
        </authorList>
    </citation>
    <scope>NUCLEOTIDE SEQUENCE [LARGE SCALE GENOMIC DNA]</scope>
    <source>
        <strain>NBRC 101917 / NGR234</strain>
    </source>
</reference>
<evidence type="ECO:0000255" key="1">
    <source>
        <dbReference type="HAMAP-Rule" id="MF_00600"/>
    </source>
</evidence>
<gene>
    <name evidence="1" type="primary">groEL1</name>
    <name evidence="1" type="synonym">groL1</name>
    <name type="ordered locus">NGR_b05820</name>
    <name type="ORF">RNGR00380</name>
</gene>
<keyword id="KW-0067">ATP-binding</keyword>
<keyword id="KW-0143">Chaperone</keyword>
<keyword id="KW-0963">Cytoplasm</keyword>
<keyword id="KW-0413">Isomerase</keyword>
<keyword id="KW-0547">Nucleotide-binding</keyword>
<keyword id="KW-0614">Plasmid</keyword>
<keyword id="KW-1185">Reference proteome</keyword>
<feature type="chain" id="PRO_0000332057" description="Chaperonin GroEL 1">
    <location>
        <begin position="1"/>
        <end position="542"/>
    </location>
</feature>
<feature type="binding site" evidence="1">
    <location>
        <begin position="30"/>
        <end position="33"/>
    </location>
    <ligand>
        <name>ATP</name>
        <dbReference type="ChEBI" id="CHEBI:30616"/>
    </ligand>
</feature>
<feature type="binding site" evidence="1">
    <location>
        <position position="51"/>
    </location>
    <ligand>
        <name>ATP</name>
        <dbReference type="ChEBI" id="CHEBI:30616"/>
    </ligand>
</feature>
<feature type="binding site" evidence="1">
    <location>
        <begin position="87"/>
        <end position="91"/>
    </location>
    <ligand>
        <name>ATP</name>
        <dbReference type="ChEBI" id="CHEBI:30616"/>
    </ligand>
</feature>
<feature type="binding site" evidence="1">
    <location>
        <position position="415"/>
    </location>
    <ligand>
        <name>ATP</name>
        <dbReference type="ChEBI" id="CHEBI:30616"/>
    </ligand>
</feature>
<feature type="binding site" evidence="1">
    <location>
        <position position="496"/>
    </location>
    <ligand>
        <name>ATP</name>
        <dbReference type="ChEBI" id="CHEBI:30616"/>
    </ligand>
</feature>
<protein>
    <recommendedName>
        <fullName evidence="1">Chaperonin GroEL 1</fullName>
        <ecNumber evidence="1">5.6.1.7</ecNumber>
    </recommendedName>
    <alternativeName>
        <fullName evidence="1">60 kDa chaperonin 1</fullName>
    </alternativeName>
    <alternativeName>
        <fullName evidence="1">Chaperonin-60 1</fullName>
        <shortName evidence="1">Cpn60 1</shortName>
    </alternativeName>
</protein>
<accession>Q6W163</accession>
<accession>C3KPN2</accession>
<sequence length="542" mass="58052">MAAKEVRFHTDAREKMLRGVDILANAVKVTLGPKGRNVVLDKSFGAPRITKDGVTVAKEVELEDKFENMGAQMVREVASKTSDIAGDGTTTATVLAQAIVKEGAKAVASGMNPMDLKRGIDKAVDAIVEELKTNARRVTKNDEIAQVGTISANGDIEIGRFLAEAVEKVGNEGVITVEEAKTAVTELEVVEGMQFDRGYLSPYFVTNPDKMRVELEEPYLLIHEKKLSNLQALLPVLESVVQSGKPLLIIAEDVEGEALATPVVNKLRGGLKIAAVKAPGFGDRRKAMLEDIAILTGGTAISEDLGIKLENVTLNMLGRAKKVVVEKENTTIVDGAGSKSEIQGRVAQIRAQIEETTSDYDREKLQERLAKLAGGVAVIRVGGSTEVEVKERKDRVDDAMHATRAAVEEGVLPGGGVALLRAVKALDSIRTENADQKHGIEIVRRALEAPVRQIAENAGAEGSIIVGKLREKTEFGFGWNAQTNEFGDLYDQGVIDPVKVVRTALQDAASVAGLLITTEAMVAEKPKKDAPLPPMPGGGMDF</sequence>
<name>CH601_SINFN</name>
<geneLocation type="plasmid">
    <name>sym pNGR234b</name>
</geneLocation>
<comment type="function">
    <text evidence="1">Together with its co-chaperonin GroES, plays an essential role in assisting protein folding. The GroEL-GroES system forms a nano-cage that allows encapsulation of the non-native substrate proteins and provides a physical environment optimized to promote and accelerate protein folding.</text>
</comment>
<comment type="catalytic activity">
    <reaction evidence="1">
        <text>ATP + H2O + a folded polypeptide = ADP + phosphate + an unfolded polypeptide.</text>
        <dbReference type="EC" id="5.6.1.7"/>
    </reaction>
</comment>
<comment type="subunit">
    <text evidence="1">Forms a cylinder of 14 subunits composed of two heptameric rings stacked back-to-back. Interacts with the co-chaperonin GroES.</text>
</comment>
<comment type="subcellular location">
    <subcellularLocation>
        <location evidence="1">Cytoplasm</location>
    </subcellularLocation>
</comment>
<comment type="similarity">
    <text evidence="1">Belongs to the chaperonin (HSP60) family.</text>
</comment>
<dbReference type="EC" id="5.6.1.7" evidence="1"/>
<dbReference type="EMBL" id="AY316747">
    <property type="protein sequence ID" value="AAQ87505.1"/>
    <property type="molecule type" value="Genomic_DNA"/>
</dbReference>
<dbReference type="EMBL" id="CP000874">
    <property type="protein sequence ID" value="ACP22040.1"/>
    <property type="molecule type" value="Genomic_DNA"/>
</dbReference>
<dbReference type="RefSeq" id="WP_015886706.1">
    <property type="nucleotide sequence ID" value="NC_012586.1"/>
</dbReference>
<dbReference type="RefSeq" id="YP_002822793.1">
    <property type="nucleotide sequence ID" value="NC_012586.1"/>
</dbReference>
<dbReference type="SMR" id="Q6W163"/>
<dbReference type="KEGG" id="rhi:NGR_b05820"/>
<dbReference type="PATRIC" id="fig|394.7.peg.1028"/>
<dbReference type="HOGENOM" id="CLU_016503_3_0_5"/>
<dbReference type="OrthoDB" id="9766614at2"/>
<dbReference type="Proteomes" id="UP000001054">
    <property type="component" value="Plasmid pNGR234b"/>
</dbReference>
<dbReference type="GO" id="GO:0005737">
    <property type="term" value="C:cytoplasm"/>
    <property type="evidence" value="ECO:0007669"/>
    <property type="project" value="UniProtKB-SubCell"/>
</dbReference>
<dbReference type="GO" id="GO:0005524">
    <property type="term" value="F:ATP binding"/>
    <property type="evidence" value="ECO:0007669"/>
    <property type="project" value="UniProtKB-UniRule"/>
</dbReference>
<dbReference type="GO" id="GO:0140662">
    <property type="term" value="F:ATP-dependent protein folding chaperone"/>
    <property type="evidence" value="ECO:0007669"/>
    <property type="project" value="InterPro"/>
</dbReference>
<dbReference type="GO" id="GO:0016853">
    <property type="term" value="F:isomerase activity"/>
    <property type="evidence" value="ECO:0007669"/>
    <property type="project" value="UniProtKB-KW"/>
</dbReference>
<dbReference type="GO" id="GO:0051082">
    <property type="term" value="F:unfolded protein binding"/>
    <property type="evidence" value="ECO:0007669"/>
    <property type="project" value="UniProtKB-UniRule"/>
</dbReference>
<dbReference type="GO" id="GO:0042026">
    <property type="term" value="P:protein refolding"/>
    <property type="evidence" value="ECO:0007669"/>
    <property type="project" value="UniProtKB-UniRule"/>
</dbReference>
<dbReference type="CDD" id="cd03344">
    <property type="entry name" value="GroEL"/>
    <property type="match status" value="1"/>
</dbReference>
<dbReference type="FunFam" id="1.10.560.10:FF:000001">
    <property type="entry name" value="60 kDa chaperonin"/>
    <property type="match status" value="1"/>
</dbReference>
<dbReference type="FunFam" id="3.50.7.10:FF:000001">
    <property type="entry name" value="60 kDa chaperonin"/>
    <property type="match status" value="1"/>
</dbReference>
<dbReference type="Gene3D" id="3.50.7.10">
    <property type="entry name" value="GroEL"/>
    <property type="match status" value="1"/>
</dbReference>
<dbReference type="Gene3D" id="1.10.560.10">
    <property type="entry name" value="GroEL-like equatorial domain"/>
    <property type="match status" value="1"/>
</dbReference>
<dbReference type="Gene3D" id="3.30.260.10">
    <property type="entry name" value="TCP-1-like chaperonin intermediate domain"/>
    <property type="match status" value="1"/>
</dbReference>
<dbReference type="HAMAP" id="MF_00600">
    <property type="entry name" value="CH60"/>
    <property type="match status" value="1"/>
</dbReference>
<dbReference type="InterPro" id="IPR018370">
    <property type="entry name" value="Chaperonin_Cpn60_CS"/>
</dbReference>
<dbReference type="InterPro" id="IPR001844">
    <property type="entry name" value="Cpn60/GroEL"/>
</dbReference>
<dbReference type="InterPro" id="IPR002423">
    <property type="entry name" value="Cpn60/GroEL/TCP-1"/>
</dbReference>
<dbReference type="InterPro" id="IPR027409">
    <property type="entry name" value="GroEL-like_apical_dom_sf"/>
</dbReference>
<dbReference type="InterPro" id="IPR027413">
    <property type="entry name" value="GROEL-like_equatorial_sf"/>
</dbReference>
<dbReference type="InterPro" id="IPR027410">
    <property type="entry name" value="TCP-1-like_intermed_sf"/>
</dbReference>
<dbReference type="NCBIfam" id="TIGR02348">
    <property type="entry name" value="GroEL"/>
    <property type="match status" value="1"/>
</dbReference>
<dbReference type="NCBIfam" id="NF000592">
    <property type="entry name" value="PRK00013.1"/>
    <property type="match status" value="1"/>
</dbReference>
<dbReference type="NCBIfam" id="NF009487">
    <property type="entry name" value="PRK12849.1"/>
    <property type="match status" value="1"/>
</dbReference>
<dbReference type="NCBIfam" id="NF009488">
    <property type="entry name" value="PRK12850.1"/>
    <property type="match status" value="1"/>
</dbReference>
<dbReference type="NCBIfam" id="NF009489">
    <property type="entry name" value="PRK12851.1"/>
    <property type="match status" value="1"/>
</dbReference>
<dbReference type="PANTHER" id="PTHR45633">
    <property type="entry name" value="60 KDA HEAT SHOCK PROTEIN, MITOCHONDRIAL"/>
    <property type="match status" value="1"/>
</dbReference>
<dbReference type="Pfam" id="PF00118">
    <property type="entry name" value="Cpn60_TCP1"/>
    <property type="match status" value="1"/>
</dbReference>
<dbReference type="PRINTS" id="PR00298">
    <property type="entry name" value="CHAPERONIN60"/>
</dbReference>
<dbReference type="SUPFAM" id="SSF52029">
    <property type="entry name" value="GroEL apical domain-like"/>
    <property type="match status" value="1"/>
</dbReference>
<dbReference type="SUPFAM" id="SSF48592">
    <property type="entry name" value="GroEL equatorial domain-like"/>
    <property type="match status" value="1"/>
</dbReference>
<dbReference type="SUPFAM" id="SSF54849">
    <property type="entry name" value="GroEL-intermediate domain like"/>
    <property type="match status" value="1"/>
</dbReference>
<dbReference type="PROSITE" id="PS00296">
    <property type="entry name" value="CHAPERONINS_CPN60"/>
    <property type="match status" value="1"/>
</dbReference>
<organism>
    <name type="scientific">Sinorhizobium fredii (strain NBRC 101917 / NGR234)</name>
    <dbReference type="NCBI Taxonomy" id="394"/>
    <lineage>
        <taxon>Bacteria</taxon>
        <taxon>Pseudomonadati</taxon>
        <taxon>Pseudomonadota</taxon>
        <taxon>Alphaproteobacteria</taxon>
        <taxon>Hyphomicrobiales</taxon>
        <taxon>Rhizobiaceae</taxon>
        <taxon>Sinorhizobium/Ensifer group</taxon>
        <taxon>Sinorhizobium</taxon>
    </lineage>
</organism>
<proteinExistence type="inferred from homology"/>